<gene>
    <name evidence="2" type="primary">bioH</name>
    <name type="ordered locus">ECP_3498</name>
</gene>
<reference key="1">
    <citation type="journal article" date="2006" name="Mol. Microbiol.">
        <title>Role of pathogenicity island-associated integrases in the genome plasticity of uropathogenic Escherichia coli strain 536.</title>
        <authorList>
            <person name="Hochhut B."/>
            <person name="Wilde C."/>
            <person name="Balling G."/>
            <person name="Middendorf B."/>
            <person name="Dobrindt U."/>
            <person name="Brzuszkiewicz E."/>
            <person name="Gottschalk G."/>
            <person name="Carniel E."/>
            <person name="Hacker J."/>
        </authorList>
    </citation>
    <scope>NUCLEOTIDE SEQUENCE [LARGE SCALE GENOMIC DNA]</scope>
    <source>
        <strain>536 / UPEC</strain>
    </source>
</reference>
<accession>Q0TC55</accession>
<name>BIOH_ECOL5</name>
<proteinExistence type="inferred from homology"/>
<sequence>MNNIWWQTKGQGNVHLVLLHGWGLNAEVWRCIDEELSSHFTLHLVDLPGFGRSRGFGALSLADMAEVVLRQAPDKAIWLGWSLGGLVASQIALTHPERVLALVTVASSPCFSARDEWPGIKPDVLAGFQQQLSDDFQRTVERFLALQTMGTETARQDARALKKTVLALPMPEVDVLNGGLEILKTVDLRLPLQNVSMPFLRLYGYLDGLVPRKVVPMLDKLWPHSESYIFAKAAHAPFISHPVEFHHLLVALKQRV</sequence>
<organism>
    <name type="scientific">Escherichia coli O6:K15:H31 (strain 536 / UPEC)</name>
    <dbReference type="NCBI Taxonomy" id="362663"/>
    <lineage>
        <taxon>Bacteria</taxon>
        <taxon>Pseudomonadati</taxon>
        <taxon>Pseudomonadota</taxon>
        <taxon>Gammaproteobacteria</taxon>
        <taxon>Enterobacterales</taxon>
        <taxon>Enterobacteriaceae</taxon>
        <taxon>Escherichia</taxon>
    </lineage>
</organism>
<protein>
    <recommendedName>
        <fullName evidence="2">Pimeloyl-[acyl-carrier protein] methyl ester esterase</fullName>
        <ecNumber evidence="2">3.1.1.85</ecNumber>
    </recommendedName>
    <alternativeName>
        <fullName evidence="2">Biotin synthesis protein BioH</fullName>
    </alternativeName>
    <alternativeName>
        <fullName evidence="2">Carboxylesterase BioH</fullName>
    </alternativeName>
</protein>
<keyword id="KW-0093">Biotin biosynthesis</keyword>
<keyword id="KW-0963">Cytoplasm</keyword>
<keyword id="KW-0378">Hydrolase</keyword>
<keyword id="KW-0719">Serine esterase</keyword>
<dbReference type="EC" id="3.1.1.85" evidence="2"/>
<dbReference type="EMBL" id="CP000247">
    <property type="protein sequence ID" value="ABG71474.1"/>
    <property type="molecule type" value="Genomic_DNA"/>
</dbReference>
<dbReference type="RefSeq" id="WP_001060083.1">
    <property type="nucleotide sequence ID" value="NC_008253.1"/>
</dbReference>
<dbReference type="SMR" id="Q0TC55"/>
<dbReference type="ESTHER" id="ecoli-bioh">
    <property type="family name" value="BioH"/>
</dbReference>
<dbReference type="MEROPS" id="S33.994"/>
<dbReference type="KEGG" id="ecp:ECP_3498"/>
<dbReference type="HOGENOM" id="CLU_020336_12_2_6"/>
<dbReference type="UniPathway" id="UPA00078"/>
<dbReference type="Proteomes" id="UP000009182">
    <property type="component" value="Chromosome"/>
</dbReference>
<dbReference type="GO" id="GO:0005737">
    <property type="term" value="C:cytoplasm"/>
    <property type="evidence" value="ECO:0007669"/>
    <property type="project" value="UniProtKB-SubCell"/>
</dbReference>
<dbReference type="GO" id="GO:0090499">
    <property type="term" value="F:pimelyl-[acyl-carrier protein] methyl ester esterase activity"/>
    <property type="evidence" value="ECO:0007669"/>
    <property type="project" value="UniProtKB-EC"/>
</dbReference>
<dbReference type="GO" id="GO:0009102">
    <property type="term" value="P:biotin biosynthetic process"/>
    <property type="evidence" value="ECO:0007669"/>
    <property type="project" value="UniProtKB-UniRule"/>
</dbReference>
<dbReference type="FunFam" id="3.40.50.1820:FF:000045">
    <property type="entry name" value="Pimeloyl-[acyl-carrier protein] methyl ester esterase"/>
    <property type="match status" value="1"/>
</dbReference>
<dbReference type="Gene3D" id="3.40.50.1820">
    <property type="entry name" value="alpha/beta hydrolase"/>
    <property type="match status" value="1"/>
</dbReference>
<dbReference type="HAMAP" id="MF_01260">
    <property type="entry name" value="Carboxylester"/>
    <property type="match status" value="1"/>
</dbReference>
<dbReference type="InterPro" id="IPR000073">
    <property type="entry name" value="AB_hydrolase_1"/>
</dbReference>
<dbReference type="InterPro" id="IPR029058">
    <property type="entry name" value="AB_hydrolase_fold"/>
</dbReference>
<dbReference type="InterPro" id="IPR010076">
    <property type="entry name" value="BioH"/>
</dbReference>
<dbReference type="InterPro" id="IPR050228">
    <property type="entry name" value="Carboxylesterase_BioH"/>
</dbReference>
<dbReference type="NCBIfam" id="TIGR01738">
    <property type="entry name" value="bioH"/>
    <property type="match status" value="1"/>
</dbReference>
<dbReference type="NCBIfam" id="NF007674">
    <property type="entry name" value="PRK10349.1"/>
    <property type="match status" value="1"/>
</dbReference>
<dbReference type="PANTHER" id="PTHR43194">
    <property type="entry name" value="HYDROLASE ALPHA/BETA FOLD FAMILY"/>
    <property type="match status" value="1"/>
</dbReference>
<dbReference type="PANTHER" id="PTHR43194:SF5">
    <property type="entry name" value="PIMELOYL-[ACYL-CARRIER PROTEIN] METHYL ESTER ESTERASE"/>
    <property type="match status" value="1"/>
</dbReference>
<dbReference type="Pfam" id="PF00561">
    <property type="entry name" value="Abhydrolase_1"/>
    <property type="match status" value="1"/>
</dbReference>
<dbReference type="SUPFAM" id="SSF53474">
    <property type="entry name" value="alpha/beta-Hydrolases"/>
    <property type="match status" value="1"/>
</dbReference>
<evidence type="ECO:0000255" key="1"/>
<evidence type="ECO:0000255" key="2">
    <source>
        <dbReference type="HAMAP-Rule" id="MF_01260"/>
    </source>
</evidence>
<comment type="function">
    <text evidence="2">The physiological role of BioH is to remove the methyl group introduced by BioC when the pimeloyl moiety is complete. It allows to synthesize pimeloyl-ACP via the fatty acid synthetic pathway through the hydrolysis of the ester bonds of pimeloyl-ACP esters.</text>
</comment>
<comment type="catalytic activity">
    <reaction evidence="2">
        <text>6-carboxyhexanoyl-[ACP] methyl ester + H2O = 6-carboxyhexanoyl-[ACP] + methanol + H(+)</text>
        <dbReference type="Rhea" id="RHEA:42700"/>
        <dbReference type="Rhea" id="RHEA-COMP:9955"/>
        <dbReference type="Rhea" id="RHEA-COMP:10186"/>
        <dbReference type="ChEBI" id="CHEBI:15377"/>
        <dbReference type="ChEBI" id="CHEBI:15378"/>
        <dbReference type="ChEBI" id="CHEBI:17790"/>
        <dbReference type="ChEBI" id="CHEBI:78846"/>
        <dbReference type="ChEBI" id="CHEBI:82735"/>
        <dbReference type="EC" id="3.1.1.85"/>
    </reaction>
</comment>
<comment type="pathway">
    <text evidence="2">Cofactor biosynthesis; biotin biosynthesis.</text>
</comment>
<comment type="subunit">
    <text evidence="2">Monomer.</text>
</comment>
<comment type="subcellular location">
    <subcellularLocation>
        <location evidence="2">Cytoplasm</location>
    </subcellularLocation>
</comment>
<comment type="similarity">
    <text evidence="2">Belongs to the AB hydrolase superfamily. Carboxylesterase BioH family.</text>
</comment>
<feature type="chain" id="PRO_1000067267" description="Pimeloyl-[acyl-carrier protein] methyl ester esterase">
    <location>
        <begin position="1"/>
        <end position="256"/>
    </location>
</feature>
<feature type="domain" description="AB hydrolase-1" evidence="1">
    <location>
        <begin position="15"/>
        <end position="242"/>
    </location>
</feature>
<feature type="active site" description="Nucleophile" evidence="2">
    <location>
        <position position="82"/>
    </location>
</feature>
<feature type="active site" evidence="2">
    <location>
        <position position="207"/>
    </location>
</feature>
<feature type="active site" evidence="2">
    <location>
        <position position="235"/>
    </location>
</feature>
<feature type="binding site" evidence="2">
    <location>
        <position position="22"/>
    </location>
    <ligand>
        <name>substrate</name>
    </ligand>
</feature>
<feature type="binding site" evidence="2">
    <location>
        <begin position="82"/>
        <end position="83"/>
    </location>
    <ligand>
        <name>substrate</name>
    </ligand>
</feature>
<feature type="binding site" evidence="2">
    <location>
        <begin position="143"/>
        <end position="147"/>
    </location>
    <ligand>
        <name>substrate</name>
    </ligand>
</feature>
<feature type="binding site" evidence="2">
    <location>
        <position position="235"/>
    </location>
    <ligand>
        <name>substrate</name>
    </ligand>
</feature>